<organism>
    <name type="scientific">Francisella tularensis subsp. holarctica (strain LVS)</name>
    <dbReference type="NCBI Taxonomy" id="376619"/>
    <lineage>
        <taxon>Bacteria</taxon>
        <taxon>Pseudomonadati</taxon>
        <taxon>Pseudomonadota</taxon>
        <taxon>Gammaproteobacteria</taxon>
        <taxon>Thiotrichales</taxon>
        <taxon>Francisellaceae</taxon>
        <taxon>Francisella</taxon>
    </lineage>
</organism>
<comment type="function">
    <text evidence="1">Catalyzes the 2-thiolation of uridine at the wobble position (U34) of tRNA, leading to the formation of s(2)U34.</text>
</comment>
<comment type="catalytic activity">
    <reaction evidence="1">
        <text>S-sulfanyl-L-cysteinyl-[protein] + uridine(34) in tRNA + AH2 + ATP = 2-thiouridine(34) in tRNA + L-cysteinyl-[protein] + A + AMP + diphosphate + H(+)</text>
        <dbReference type="Rhea" id="RHEA:47032"/>
        <dbReference type="Rhea" id="RHEA-COMP:10131"/>
        <dbReference type="Rhea" id="RHEA-COMP:11726"/>
        <dbReference type="Rhea" id="RHEA-COMP:11727"/>
        <dbReference type="Rhea" id="RHEA-COMP:11728"/>
        <dbReference type="ChEBI" id="CHEBI:13193"/>
        <dbReference type="ChEBI" id="CHEBI:15378"/>
        <dbReference type="ChEBI" id="CHEBI:17499"/>
        <dbReference type="ChEBI" id="CHEBI:29950"/>
        <dbReference type="ChEBI" id="CHEBI:30616"/>
        <dbReference type="ChEBI" id="CHEBI:33019"/>
        <dbReference type="ChEBI" id="CHEBI:61963"/>
        <dbReference type="ChEBI" id="CHEBI:65315"/>
        <dbReference type="ChEBI" id="CHEBI:87170"/>
        <dbReference type="ChEBI" id="CHEBI:456215"/>
        <dbReference type="EC" id="2.8.1.13"/>
    </reaction>
</comment>
<comment type="subcellular location">
    <subcellularLocation>
        <location evidence="1">Cytoplasm</location>
    </subcellularLocation>
</comment>
<comment type="similarity">
    <text evidence="1">Belongs to the MnmA/TRMU family.</text>
</comment>
<sequence length="359" mass="40130">MENKKVIVGISGGVDSSVSALLLKQQGYDVTGVFMKNWEEDDTDEFCSAEQDIADAQAVCDSIGIPFKKINFTAEYWDNVFEHFLIEYKAGRTPNPDILCNKEIKFKAFLSYVHLLGGDYIATGHYAQTRLAADGSVQLVKGLDDNKDQTYFLYTLGQEQLRQTIFPIGNIEKSKVREIAKENNLVTFDKKDSTGICFIGERKFKEFLSKYLPAQKGEIHDENGIKIGMHDGLMYYTIGQRQGLGIGGVKDRPEVPWFAAKKDLENNVLIAVQGHDHPLLFKQSLQAIELSWVAGMAPADKFRCAAKVRYRQKDQSCEVEVNQDGSVNVTFDQPQRAITPGQSVVFYIDDVCLGGGVII</sequence>
<dbReference type="EC" id="2.8.1.13" evidence="1"/>
<dbReference type="EMBL" id="AM233362">
    <property type="protein sequence ID" value="CAJ78513.1"/>
    <property type="molecule type" value="Genomic_DNA"/>
</dbReference>
<dbReference type="RefSeq" id="WP_010032231.1">
    <property type="nucleotide sequence ID" value="NZ_CP009694.1"/>
</dbReference>
<dbReference type="SMR" id="Q2A5X5"/>
<dbReference type="KEGG" id="ftl:FTL_0072"/>
<dbReference type="Proteomes" id="UP000001944">
    <property type="component" value="Chromosome"/>
</dbReference>
<dbReference type="GO" id="GO:0005737">
    <property type="term" value="C:cytoplasm"/>
    <property type="evidence" value="ECO:0007669"/>
    <property type="project" value="UniProtKB-SubCell"/>
</dbReference>
<dbReference type="GO" id="GO:0005524">
    <property type="term" value="F:ATP binding"/>
    <property type="evidence" value="ECO:0007669"/>
    <property type="project" value="UniProtKB-KW"/>
</dbReference>
<dbReference type="GO" id="GO:0000049">
    <property type="term" value="F:tRNA binding"/>
    <property type="evidence" value="ECO:0007669"/>
    <property type="project" value="UniProtKB-KW"/>
</dbReference>
<dbReference type="GO" id="GO:0103016">
    <property type="term" value="F:tRNA-uridine 2-sulfurtransferase activity"/>
    <property type="evidence" value="ECO:0007669"/>
    <property type="project" value="UniProtKB-EC"/>
</dbReference>
<dbReference type="GO" id="GO:0002143">
    <property type="term" value="P:tRNA wobble position uridine thiolation"/>
    <property type="evidence" value="ECO:0007669"/>
    <property type="project" value="TreeGrafter"/>
</dbReference>
<dbReference type="CDD" id="cd01998">
    <property type="entry name" value="MnmA_TRMU-like"/>
    <property type="match status" value="1"/>
</dbReference>
<dbReference type="FunFam" id="2.30.30.280:FF:000001">
    <property type="entry name" value="tRNA-specific 2-thiouridylase MnmA"/>
    <property type="match status" value="1"/>
</dbReference>
<dbReference type="FunFam" id="2.40.30.10:FF:000023">
    <property type="entry name" value="tRNA-specific 2-thiouridylase MnmA"/>
    <property type="match status" value="1"/>
</dbReference>
<dbReference type="FunFam" id="3.40.50.620:FF:000004">
    <property type="entry name" value="tRNA-specific 2-thiouridylase MnmA"/>
    <property type="match status" value="1"/>
</dbReference>
<dbReference type="Gene3D" id="2.30.30.280">
    <property type="entry name" value="Adenine nucleotide alpha hydrolases-like domains"/>
    <property type="match status" value="1"/>
</dbReference>
<dbReference type="Gene3D" id="3.40.50.620">
    <property type="entry name" value="HUPs"/>
    <property type="match status" value="1"/>
</dbReference>
<dbReference type="Gene3D" id="2.40.30.10">
    <property type="entry name" value="Translation factors"/>
    <property type="match status" value="1"/>
</dbReference>
<dbReference type="HAMAP" id="MF_00144">
    <property type="entry name" value="tRNA_thiouridyl_MnmA"/>
    <property type="match status" value="1"/>
</dbReference>
<dbReference type="InterPro" id="IPR004506">
    <property type="entry name" value="MnmA-like"/>
</dbReference>
<dbReference type="InterPro" id="IPR046885">
    <property type="entry name" value="MnmA-like_C"/>
</dbReference>
<dbReference type="InterPro" id="IPR046884">
    <property type="entry name" value="MnmA-like_central"/>
</dbReference>
<dbReference type="InterPro" id="IPR023382">
    <property type="entry name" value="MnmA-like_central_sf"/>
</dbReference>
<dbReference type="InterPro" id="IPR014729">
    <property type="entry name" value="Rossmann-like_a/b/a_fold"/>
</dbReference>
<dbReference type="NCBIfam" id="NF001138">
    <property type="entry name" value="PRK00143.1"/>
    <property type="match status" value="1"/>
</dbReference>
<dbReference type="NCBIfam" id="TIGR00420">
    <property type="entry name" value="trmU"/>
    <property type="match status" value="1"/>
</dbReference>
<dbReference type="PANTHER" id="PTHR11933:SF5">
    <property type="entry name" value="MITOCHONDRIAL TRNA-SPECIFIC 2-THIOURIDYLASE 1"/>
    <property type="match status" value="1"/>
</dbReference>
<dbReference type="PANTHER" id="PTHR11933">
    <property type="entry name" value="TRNA 5-METHYLAMINOMETHYL-2-THIOURIDYLATE -METHYLTRANSFERASE"/>
    <property type="match status" value="1"/>
</dbReference>
<dbReference type="Pfam" id="PF03054">
    <property type="entry name" value="tRNA_Me_trans"/>
    <property type="match status" value="1"/>
</dbReference>
<dbReference type="Pfam" id="PF20258">
    <property type="entry name" value="tRNA_Me_trans_C"/>
    <property type="match status" value="1"/>
</dbReference>
<dbReference type="Pfam" id="PF20259">
    <property type="entry name" value="tRNA_Me_trans_M"/>
    <property type="match status" value="1"/>
</dbReference>
<dbReference type="SUPFAM" id="SSF52402">
    <property type="entry name" value="Adenine nucleotide alpha hydrolases-like"/>
    <property type="match status" value="1"/>
</dbReference>
<protein>
    <recommendedName>
        <fullName evidence="1">tRNA-specific 2-thiouridylase MnmA</fullName>
        <ecNumber evidence="1">2.8.1.13</ecNumber>
    </recommendedName>
</protein>
<keyword id="KW-0067">ATP-binding</keyword>
<keyword id="KW-0963">Cytoplasm</keyword>
<keyword id="KW-1015">Disulfide bond</keyword>
<keyword id="KW-0547">Nucleotide-binding</keyword>
<keyword id="KW-1185">Reference proteome</keyword>
<keyword id="KW-0694">RNA-binding</keyword>
<keyword id="KW-0808">Transferase</keyword>
<keyword id="KW-0819">tRNA processing</keyword>
<keyword id="KW-0820">tRNA-binding</keyword>
<reference key="1">
    <citation type="submission" date="2006-03" db="EMBL/GenBank/DDBJ databases">
        <title>Complete genome sequence of Francisella tularensis LVS (Live Vaccine Strain).</title>
        <authorList>
            <person name="Chain P."/>
            <person name="Larimer F."/>
            <person name="Land M."/>
            <person name="Stilwagen S."/>
            <person name="Larsson P."/>
            <person name="Bearden S."/>
            <person name="Chu M."/>
            <person name="Oyston P."/>
            <person name="Forsman M."/>
            <person name="Andersson S."/>
            <person name="Lindler L."/>
            <person name="Titball R."/>
            <person name="Garcia E."/>
        </authorList>
    </citation>
    <scope>NUCLEOTIDE SEQUENCE [LARGE SCALE GENOMIC DNA]</scope>
    <source>
        <strain>LVS</strain>
    </source>
</reference>
<gene>
    <name evidence="1" type="primary">mnmA</name>
    <name type="synonym">trmU</name>
    <name type="ordered locus">FTL_0072</name>
</gene>
<accession>Q2A5X5</accession>
<proteinExistence type="inferred from homology"/>
<evidence type="ECO:0000255" key="1">
    <source>
        <dbReference type="HAMAP-Rule" id="MF_00144"/>
    </source>
</evidence>
<name>MNMA_FRATH</name>
<feature type="chain" id="PRO_1000009525" description="tRNA-specific 2-thiouridylase MnmA">
    <location>
        <begin position="1"/>
        <end position="359"/>
    </location>
</feature>
<feature type="region of interest" description="Interaction with target base in tRNA" evidence="1">
    <location>
        <begin position="95"/>
        <end position="97"/>
    </location>
</feature>
<feature type="region of interest" description="Interaction with tRNA" evidence="1">
    <location>
        <begin position="147"/>
        <end position="149"/>
    </location>
</feature>
<feature type="region of interest" description="Interaction with tRNA" evidence="1">
    <location>
        <begin position="309"/>
        <end position="310"/>
    </location>
</feature>
<feature type="active site" description="Nucleophile" evidence="1">
    <location>
        <position position="100"/>
    </location>
</feature>
<feature type="active site" description="Cysteine persulfide intermediate" evidence="1">
    <location>
        <position position="197"/>
    </location>
</feature>
<feature type="binding site" evidence="1">
    <location>
        <begin position="9"/>
        <end position="16"/>
    </location>
    <ligand>
        <name>ATP</name>
        <dbReference type="ChEBI" id="CHEBI:30616"/>
    </ligand>
</feature>
<feature type="binding site" evidence="1">
    <location>
        <position position="35"/>
    </location>
    <ligand>
        <name>ATP</name>
        <dbReference type="ChEBI" id="CHEBI:30616"/>
    </ligand>
</feature>
<feature type="binding site" evidence="1">
    <location>
        <position position="124"/>
    </location>
    <ligand>
        <name>ATP</name>
        <dbReference type="ChEBI" id="CHEBI:30616"/>
    </ligand>
</feature>
<feature type="site" description="Interaction with tRNA" evidence="1">
    <location>
        <position position="125"/>
    </location>
</feature>
<feature type="site" description="Interaction with tRNA" evidence="1">
    <location>
        <position position="342"/>
    </location>
</feature>
<feature type="disulfide bond" description="Alternate" evidence="1">
    <location>
        <begin position="100"/>
        <end position="197"/>
    </location>
</feature>